<feature type="transit peptide" description="Chloroplast" evidence="2">
    <location>
        <begin position="1"/>
        <end position="47"/>
    </location>
</feature>
<feature type="chain" id="PRO_0000399287" description="Adenylosuccinate synthetase 1, chloroplastic">
    <location>
        <begin position="48"/>
        <end position="490"/>
    </location>
</feature>
<feature type="region of interest" description="Disordered" evidence="3">
    <location>
        <begin position="14"/>
        <end position="36"/>
    </location>
</feature>
<feature type="active site" description="Proton acceptor" evidence="2">
    <location>
        <position position="78"/>
    </location>
</feature>
<feature type="active site" description="Proton donor" evidence="2">
    <location>
        <position position="106"/>
    </location>
</feature>
<feature type="binding site" evidence="2">
    <location>
        <begin position="77"/>
        <end position="83"/>
    </location>
    <ligand>
        <name>GTP</name>
        <dbReference type="ChEBI" id="CHEBI:37565"/>
    </ligand>
</feature>
<feature type="binding site" description="in other chain" evidence="2">
    <location>
        <begin position="78"/>
        <end position="81"/>
    </location>
    <ligand>
        <name>IMP</name>
        <dbReference type="ChEBI" id="CHEBI:58053"/>
        <note>ligand shared between dimeric partners</note>
    </ligand>
</feature>
<feature type="binding site" evidence="2">
    <location>
        <position position="78"/>
    </location>
    <ligand>
        <name>Mg(2+)</name>
        <dbReference type="ChEBI" id="CHEBI:18420"/>
    </ligand>
</feature>
<feature type="binding site" description="in other chain" evidence="2">
    <location>
        <begin position="103"/>
        <end position="106"/>
    </location>
    <ligand>
        <name>IMP</name>
        <dbReference type="ChEBI" id="CHEBI:58053"/>
        <note>ligand shared between dimeric partners</note>
    </ligand>
</feature>
<feature type="binding site" evidence="2">
    <location>
        <begin position="105"/>
        <end position="107"/>
    </location>
    <ligand>
        <name>GTP</name>
        <dbReference type="ChEBI" id="CHEBI:37565"/>
    </ligand>
</feature>
<feature type="binding site" evidence="2">
    <location>
        <position position="105"/>
    </location>
    <ligand>
        <name>Mg(2+)</name>
        <dbReference type="ChEBI" id="CHEBI:18420"/>
    </ligand>
</feature>
<feature type="binding site" description="in other chain" evidence="2">
    <location>
        <position position="195"/>
    </location>
    <ligand>
        <name>IMP</name>
        <dbReference type="ChEBI" id="CHEBI:58053"/>
        <note>ligand shared between dimeric partners</note>
    </ligand>
</feature>
<feature type="binding site" evidence="2">
    <location>
        <position position="209"/>
    </location>
    <ligand>
        <name>IMP</name>
        <dbReference type="ChEBI" id="CHEBI:58053"/>
        <note>ligand shared between dimeric partners</note>
    </ligand>
</feature>
<feature type="binding site" description="in other chain" evidence="2">
    <location>
        <position position="289"/>
    </location>
    <ligand>
        <name>IMP</name>
        <dbReference type="ChEBI" id="CHEBI:58053"/>
        <note>ligand shared between dimeric partners</note>
    </ligand>
</feature>
<feature type="binding site" description="in other chain" evidence="2">
    <location>
        <position position="304"/>
    </location>
    <ligand>
        <name>IMP</name>
        <dbReference type="ChEBI" id="CHEBI:58053"/>
        <note>ligand shared between dimeric partners</note>
    </ligand>
</feature>
<feature type="binding site" evidence="2">
    <location>
        <begin position="364"/>
        <end position="370"/>
    </location>
    <ligand>
        <name>substrate</name>
    </ligand>
</feature>
<feature type="binding site" description="in other chain" evidence="2">
    <location>
        <position position="368"/>
    </location>
    <ligand>
        <name>IMP</name>
        <dbReference type="ChEBI" id="CHEBI:58053"/>
        <note>ligand shared between dimeric partners</note>
    </ligand>
</feature>
<feature type="binding site" evidence="2">
    <location>
        <position position="370"/>
    </location>
    <ligand>
        <name>GTP</name>
        <dbReference type="ChEBI" id="CHEBI:37565"/>
    </ligand>
</feature>
<feature type="binding site" evidence="2">
    <location>
        <begin position="396"/>
        <end position="398"/>
    </location>
    <ligand>
        <name>GTP</name>
        <dbReference type="ChEBI" id="CHEBI:37565"/>
    </ligand>
</feature>
<feature type="binding site" evidence="2">
    <location>
        <begin position="479"/>
        <end position="481"/>
    </location>
    <ligand>
        <name>GTP</name>
        <dbReference type="ChEBI" id="CHEBI:37565"/>
    </ligand>
</feature>
<keyword id="KW-0150">Chloroplast</keyword>
<keyword id="KW-0342">GTP-binding</keyword>
<keyword id="KW-0436">Ligase</keyword>
<keyword id="KW-0460">Magnesium</keyword>
<keyword id="KW-0479">Metal-binding</keyword>
<keyword id="KW-0547">Nucleotide-binding</keyword>
<keyword id="KW-0934">Plastid</keyword>
<keyword id="KW-0658">Purine biosynthesis</keyword>
<keyword id="KW-1185">Reference proteome</keyword>
<keyword id="KW-0809">Transit peptide</keyword>
<organism>
    <name type="scientific">Sorghum bicolor</name>
    <name type="common">Sorghum</name>
    <name type="synonym">Sorghum vulgare</name>
    <dbReference type="NCBI Taxonomy" id="4558"/>
    <lineage>
        <taxon>Eukaryota</taxon>
        <taxon>Viridiplantae</taxon>
        <taxon>Streptophyta</taxon>
        <taxon>Embryophyta</taxon>
        <taxon>Tracheophyta</taxon>
        <taxon>Spermatophyta</taxon>
        <taxon>Magnoliopsida</taxon>
        <taxon>Liliopsida</taxon>
        <taxon>Poales</taxon>
        <taxon>Poaceae</taxon>
        <taxon>PACMAD clade</taxon>
        <taxon>Panicoideae</taxon>
        <taxon>Andropogonodae</taxon>
        <taxon>Andropogoneae</taxon>
        <taxon>Sorghinae</taxon>
        <taxon>Sorghum</taxon>
    </lineage>
</organism>
<comment type="function">
    <text evidence="1">Plays an important role in the de novo pathway and in the salvage pathway of purine nucleotide biosynthesis. Catalyzes the first committed step in the biosynthesis of AMP from IMP (By similarity).</text>
</comment>
<comment type="catalytic activity">
    <reaction evidence="2">
        <text>IMP + L-aspartate + GTP = N(6)-(1,2-dicarboxyethyl)-AMP + GDP + phosphate + 2 H(+)</text>
        <dbReference type="Rhea" id="RHEA:15753"/>
        <dbReference type="ChEBI" id="CHEBI:15378"/>
        <dbReference type="ChEBI" id="CHEBI:29991"/>
        <dbReference type="ChEBI" id="CHEBI:37565"/>
        <dbReference type="ChEBI" id="CHEBI:43474"/>
        <dbReference type="ChEBI" id="CHEBI:57567"/>
        <dbReference type="ChEBI" id="CHEBI:58053"/>
        <dbReference type="ChEBI" id="CHEBI:58189"/>
        <dbReference type="EC" id="6.3.4.4"/>
    </reaction>
</comment>
<comment type="cofactor">
    <cofactor evidence="2">
        <name>Mg(2+)</name>
        <dbReference type="ChEBI" id="CHEBI:18420"/>
    </cofactor>
    <text evidence="2">Binds 1 Mg(2+) ion per subunit.</text>
</comment>
<comment type="pathway">
    <text evidence="2">Purine metabolism; AMP biosynthesis via de novo pathway; AMP from IMP: step 1/2.</text>
</comment>
<comment type="subunit">
    <text evidence="2">Homodimer.</text>
</comment>
<comment type="subcellular location">
    <subcellularLocation>
        <location evidence="2">Plastid</location>
        <location evidence="2">Chloroplast</location>
    </subcellularLocation>
</comment>
<comment type="similarity">
    <text evidence="2">Belongs to the adenylosuccinate synthetase family.</text>
</comment>
<evidence type="ECO:0000250" key="1"/>
<evidence type="ECO:0000255" key="2">
    <source>
        <dbReference type="HAMAP-Rule" id="MF_03125"/>
    </source>
</evidence>
<evidence type="ECO:0000256" key="3">
    <source>
        <dbReference type="SAM" id="MobiDB-lite"/>
    </source>
</evidence>
<sequence>MSLSTLSHPAAAAAAATGSGKSHFRTAPAAQSVRFPKARPPVPAAVSAASAAVHADPAEDRVSSLSQVSGVLGSQWGDEGKGKLVDVLAPRFDIVARCQGGANAGHTIYNAEGKKFALHLVPSGILHEGTLCVVGNGAVIHVPGFFGEIDGLESNGVRCDGRILVSDRAHLLFDLHQVVDGLREAELENSFIGTTKRGIGPCYSSKVTRNGLRVCDLRHMDTFGDKLDVLFKDAASRFQGFQYSKSMLKEEVERYKKFADRLEPFIADTVHVLNESIQQKKKILVEGGQATMLDIDFGTYPFVTSSSPSAGGICTGLGIAPRVIGDLIGVVKAYTSRVGSGPFPTELFGEEGDRLRKAGMEFGTTTGRPRRCGWLDIVALKYCCQINGFSSFNLTKLDVLSGLSEIKVGVSYSRPDGQKLQSFPGDLDTLEQVQVNYEVLPGWQTDISSVRSYNELPQAARLYVERIEELVGVPVHYIGVGPGRDALIYK</sequence>
<protein>
    <recommendedName>
        <fullName evidence="2">Adenylosuccinate synthetase 1, chloroplastic</fullName>
        <shortName evidence="2">AMPSase 1</shortName>
        <shortName evidence="2">AdSS 1</shortName>
        <ecNumber evidence="2">6.3.4.4</ecNumber>
    </recommendedName>
    <alternativeName>
        <fullName evidence="2">IMP--aspartate ligase 1</fullName>
    </alternativeName>
</protein>
<name>PURA1_SORBI</name>
<reference key="1">
    <citation type="journal article" date="2009" name="Nature">
        <title>The Sorghum bicolor genome and the diversification of grasses.</title>
        <authorList>
            <person name="Paterson A.H."/>
            <person name="Bowers J.E."/>
            <person name="Bruggmann R."/>
            <person name="Dubchak I."/>
            <person name="Grimwood J."/>
            <person name="Gundlach H."/>
            <person name="Haberer G."/>
            <person name="Hellsten U."/>
            <person name="Mitros T."/>
            <person name="Poliakov A."/>
            <person name="Schmutz J."/>
            <person name="Spannagl M."/>
            <person name="Tang H."/>
            <person name="Wang X."/>
            <person name="Wicker T."/>
            <person name="Bharti A.K."/>
            <person name="Chapman J."/>
            <person name="Feltus F.A."/>
            <person name="Gowik U."/>
            <person name="Grigoriev I.V."/>
            <person name="Lyons E."/>
            <person name="Maher C.A."/>
            <person name="Martis M."/>
            <person name="Narechania A."/>
            <person name="Otillar R.P."/>
            <person name="Penning B.W."/>
            <person name="Salamov A.A."/>
            <person name="Wang Y."/>
            <person name="Zhang L."/>
            <person name="Carpita N.C."/>
            <person name="Freeling M."/>
            <person name="Gingle A.R."/>
            <person name="Hash C.T."/>
            <person name="Keller B."/>
            <person name="Klein P."/>
            <person name="Kresovich S."/>
            <person name="McCann M.C."/>
            <person name="Ming R."/>
            <person name="Peterson D.G."/>
            <person name="Mehboob-ur-Rahman M."/>
            <person name="Ware D."/>
            <person name="Westhoff P."/>
            <person name="Mayer K.F.X."/>
            <person name="Messing J."/>
            <person name="Rokhsar D.S."/>
        </authorList>
    </citation>
    <scope>NUCLEOTIDE SEQUENCE [LARGE SCALE GENOMIC DNA]</scope>
    <source>
        <strain>cv. BTx623</strain>
    </source>
</reference>
<reference key="2">
    <citation type="journal article" date="2018" name="Plant J.">
        <title>The Sorghum bicolor reference genome: improved assembly, gene annotations, a transcriptome atlas, and signatures of genome organization.</title>
        <authorList>
            <person name="McCormick R.F."/>
            <person name="Truong S.K."/>
            <person name="Sreedasyam A."/>
            <person name="Jenkins J."/>
            <person name="Shu S."/>
            <person name="Sims D."/>
            <person name="Kennedy M."/>
            <person name="Amirebrahimi M."/>
            <person name="Weers B.D."/>
            <person name="McKinley B."/>
            <person name="Mattison A."/>
            <person name="Morishige D.T."/>
            <person name="Grimwood J."/>
            <person name="Schmutz J."/>
            <person name="Mullet J.E."/>
        </authorList>
    </citation>
    <scope>GENOME REANNOTATION</scope>
    <source>
        <strain>cv. BTx623</strain>
    </source>
</reference>
<proteinExistence type="inferred from homology"/>
<dbReference type="EC" id="6.3.4.4" evidence="2"/>
<dbReference type="EMBL" id="CM000760">
    <property type="protein sequence ID" value="EER92769.1"/>
    <property type="molecule type" value="Genomic_DNA"/>
</dbReference>
<dbReference type="RefSeq" id="XP_002465771.1">
    <property type="nucleotide sequence ID" value="XM_002465726.1"/>
</dbReference>
<dbReference type="SMR" id="C5WVW2"/>
<dbReference type="FunCoup" id="C5WVW2">
    <property type="interactions" value="2295"/>
</dbReference>
<dbReference type="STRING" id="4558.C5WVW2"/>
<dbReference type="KEGG" id="sbi:8059802"/>
<dbReference type="eggNOG" id="KOG1355">
    <property type="taxonomic scope" value="Eukaryota"/>
</dbReference>
<dbReference type="HOGENOM" id="CLU_029848_0_0_1"/>
<dbReference type="InParanoid" id="C5WVW2"/>
<dbReference type="OrthoDB" id="10265645at2759"/>
<dbReference type="UniPathway" id="UPA00075">
    <property type="reaction ID" value="UER00335"/>
</dbReference>
<dbReference type="Proteomes" id="UP000000768">
    <property type="component" value="Chromosome 1"/>
</dbReference>
<dbReference type="ExpressionAtlas" id="C5WVW2">
    <property type="expression patterns" value="baseline and differential"/>
</dbReference>
<dbReference type="GO" id="GO:0009507">
    <property type="term" value="C:chloroplast"/>
    <property type="evidence" value="ECO:0007669"/>
    <property type="project" value="UniProtKB-SubCell"/>
</dbReference>
<dbReference type="GO" id="GO:0005737">
    <property type="term" value="C:cytoplasm"/>
    <property type="evidence" value="ECO:0000318"/>
    <property type="project" value="GO_Central"/>
</dbReference>
<dbReference type="GO" id="GO:0004019">
    <property type="term" value="F:adenylosuccinate synthase activity"/>
    <property type="evidence" value="ECO:0000318"/>
    <property type="project" value="GO_Central"/>
</dbReference>
<dbReference type="GO" id="GO:0005525">
    <property type="term" value="F:GTP binding"/>
    <property type="evidence" value="ECO:0007669"/>
    <property type="project" value="UniProtKB-UniRule"/>
</dbReference>
<dbReference type="GO" id="GO:0000287">
    <property type="term" value="F:magnesium ion binding"/>
    <property type="evidence" value="ECO:0007669"/>
    <property type="project" value="UniProtKB-UniRule"/>
</dbReference>
<dbReference type="GO" id="GO:0044208">
    <property type="term" value="P:'de novo' AMP biosynthetic process"/>
    <property type="evidence" value="ECO:0000318"/>
    <property type="project" value="GO_Central"/>
</dbReference>
<dbReference type="GO" id="GO:0046040">
    <property type="term" value="P:IMP metabolic process"/>
    <property type="evidence" value="ECO:0000318"/>
    <property type="project" value="GO_Central"/>
</dbReference>
<dbReference type="CDD" id="cd03108">
    <property type="entry name" value="AdSS"/>
    <property type="match status" value="1"/>
</dbReference>
<dbReference type="FunFam" id="3.90.170.10:FF:000001">
    <property type="entry name" value="Adenylosuccinate synthetase"/>
    <property type="match status" value="1"/>
</dbReference>
<dbReference type="FunFam" id="1.10.300.10:FF:000002">
    <property type="entry name" value="Adenylosuccinate synthetase, chloroplastic"/>
    <property type="match status" value="1"/>
</dbReference>
<dbReference type="Gene3D" id="3.40.440.10">
    <property type="entry name" value="Adenylosuccinate Synthetase, subunit A, domain 1"/>
    <property type="match status" value="1"/>
</dbReference>
<dbReference type="Gene3D" id="1.10.300.10">
    <property type="entry name" value="Adenylosuccinate Synthetase, subunit A, domain 2"/>
    <property type="match status" value="1"/>
</dbReference>
<dbReference type="Gene3D" id="3.90.170.10">
    <property type="entry name" value="Adenylosuccinate Synthetase, subunit A, domain 3"/>
    <property type="match status" value="1"/>
</dbReference>
<dbReference type="HAMAP" id="MF_00011">
    <property type="entry name" value="Adenylosucc_synth"/>
    <property type="match status" value="1"/>
</dbReference>
<dbReference type="InterPro" id="IPR018220">
    <property type="entry name" value="Adenylosuccin_syn_GTP-bd"/>
</dbReference>
<dbReference type="InterPro" id="IPR033128">
    <property type="entry name" value="Adenylosuccin_syn_Lys_AS"/>
</dbReference>
<dbReference type="InterPro" id="IPR042109">
    <property type="entry name" value="Adenylosuccinate_synth_dom1"/>
</dbReference>
<dbReference type="InterPro" id="IPR042110">
    <property type="entry name" value="Adenylosuccinate_synth_dom2"/>
</dbReference>
<dbReference type="InterPro" id="IPR042111">
    <property type="entry name" value="Adenylosuccinate_synth_dom3"/>
</dbReference>
<dbReference type="InterPro" id="IPR001114">
    <property type="entry name" value="Adenylosuccinate_synthetase"/>
</dbReference>
<dbReference type="InterPro" id="IPR027417">
    <property type="entry name" value="P-loop_NTPase"/>
</dbReference>
<dbReference type="NCBIfam" id="NF002223">
    <property type="entry name" value="PRK01117.1"/>
    <property type="match status" value="1"/>
</dbReference>
<dbReference type="NCBIfam" id="TIGR00184">
    <property type="entry name" value="purA"/>
    <property type="match status" value="1"/>
</dbReference>
<dbReference type="PANTHER" id="PTHR11846">
    <property type="entry name" value="ADENYLOSUCCINATE SYNTHETASE"/>
    <property type="match status" value="1"/>
</dbReference>
<dbReference type="PANTHER" id="PTHR11846:SF19">
    <property type="entry name" value="ADENYLOSUCCINATE SYNTHETASE 1, CHLOROPLASTIC"/>
    <property type="match status" value="1"/>
</dbReference>
<dbReference type="Pfam" id="PF00709">
    <property type="entry name" value="Adenylsucc_synt"/>
    <property type="match status" value="1"/>
</dbReference>
<dbReference type="SMART" id="SM00788">
    <property type="entry name" value="Adenylsucc_synt"/>
    <property type="match status" value="1"/>
</dbReference>
<dbReference type="SUPFAM" id="SSF52540">
    <property type="entry name" value="P-loop containing nucleoside triphosphate hydrolases"/>
    <property type="match status" value="1"/>
</dbReference>
<dbReference type="PROSITE" id="PS01266">
    <property type="entry name" value="ADENYLOSUCCIN_SYN_1"/>
    <property type="match status" value="1"/>
</dbReference>
<dbReference type="PROSITE" id="PS00513">
    <property type="entry name" value="ADENYLOSUCCIN_SYN_2"/>
    <property type="match status" value="1"/>
</dbReference>
<gene>
    <name evidence="2" type="primary">PURA1</name>
    <name type="ordered locus">Sb01g045540</name>
</gene>
<accession>C5WVW2</accession>